<sequence length="549" mass="58109">MAKTIEFDETARRKLLSGVNKLANAVKVTLGPKGRNVVIDKKFGSPTITKDGVTVAKEIELEDAIENMGAQMVKEVSTKTNDIAGDGTTTATILAQAIINEGLKNVTAGANPMALKHGIDKAVVVAVEEIKKHAIKINSKAEYANVATISANNDPEIGNLIAQAFDKVGKEGVITVDEAKSIETTLDIVEGMQFDRGYVSPYMVTDPEAMIATFNDPFILIYDKKIASMKDLLPVLEKIAQAGRPLVIIAEEVEGEALATIVVNTLRKTIQCVAVKAPGFGDRRKAMLEDIAILTGGQVISEDLGMKLENADVKMLGRAKKVVVDKENTTIIEGAGASKDIQGRVNQIKKQIEDTTSDYDREKLQERLAKLAGGVAVIHVGAATEVEMKEKKARVEDALSATRAAVEEGIVPGGGLTLLRAQDAVKALKLVGDEQTGANIILRALEEPIRMITSNAGLEGSVIVEQARARKGNEGFNALTMVWEDLIKAGVVDPAKVVRSALQNAASIGAMILTTEVTITDKPEPKDASGAGMGGMGGMGGMGGMGGMM</sequence>
<dbReference type="EC" id="5.6.1.7" evidence="1"/>
<dbReference type="EMBL" id="CP000786">
    <property type="protein sequence ID" value="ABZ98435.1"/>
    <property type="molecule type" value="Genomic_DNA"/>
</dbReference>
<dbReference type="RefSeq" id="WP_012389299.1">
    <property type="nucleotide sequence ID" value="NC_010602.1"/>
</dbReference>
<dbReference type="SMR" id="B0SKU2"/>
<dbReference type="STRING" id="456481.LEPBI_I2344"/>
<dbReference type="KEGG" id="lbi:LEPBI_I2344"/>
<dbReference type="HOGENOM" id="CLU_016503_3_0_12"/>
<dbReference type="OrthoDB" id="9766614at2"/>
<dbReference type="BioCyc" id="LBIF456481:LEPBI_RS11575-MONOMER"/>
<dbReference type="Proteomes" id="UP000001847">
    <property type="component" value="Chromosome I"/>
</dbReference>
<dbReference type="GO" id="GO:0005737">
    <property type="term" value="C:cytoplasm"/>
    <property type="evidence" value="ECO:0007669"/>
    <property type="project" value="UniProtKB-SubCell"/>
</dbReference>
<dbReference type="GO" id="GO:0005524">
    <property type="term" value="F:ATP binding"/>
    <property type="evidence" value="ECO:0007669"/>
    <property type="project" value="UniProtKB-UniRule"/>
</dbReference>
<dbReference type="GO" id="GO:0140662">
    <property type="term" value="F:ATP-dependent protein folding chaperone"/>
    <property type="evidence" value="ECO:0007669"/>
    <property type="project" value="InterPro"/>
</dbReference>
<dbReference type="GO" id="GO:0016853">
    <property type="term" value="F:isomerase activity"/>
    <property type="evidence" value="ECO:0007669"/>
    <property type="project" value="UniProtKB-KW"/>
</dbReference>
<dbReference type="GO" id="GO:0051082">
    <property type="term" value="F:unfolded protein binding"/>
    <property type="evidence" value="ECO:0007669"/>
    <property type="project" value="UniProtKB-UniRule"/>
</dbReference>
<dbReference type="GO" id="GO:0042026">
    <property type="term" value="P:protein refolding"/>
    <property type="evidence" value="ECO:0007669"/>
    <property type="project" value="UniProtKB-UniRule"/>
</dbReference>
<dbReference type="CDD" id="cd03344">
    <property type="entry name" value="GroEL"/>
    <property type="match status" value="1"/>
</dbReference>
<dbReference type="FunFam" id="3.50.7.10:FF:000001">
    <property type="entry name" value="60 kDa chaperonin"/>
    <property type="match status" value="1"/>
</dbReference>
<dbReference type="Gene3D" id="3.50.7.10">
    <property type="entry name" value="GroEL"/>
    <property type="match status" value="1"/>
</dbReference>
<dbReference type="Gene3D" id="1.10.560.10">
    <property type="entry name" value="GroEL-like equatorial domain"/>
    <property type="match status" value="1"/>
</dbReference>
<dbReference type="Gene3D" id="3.30.260.10">
    <property type="entry name" value="TCP-1-like chaperonin intermediate domain"/>
    <property type="match status" value="1"/>
</dbReference>
<dbReference type="HAMAP" id="MF_00600">
    <property type="entry name" value="CH60"/>
    <property type="match status" value="1"/>
</dbReference>
<dbReference type="InterPro" id="IPR018370">
    <property type="entry name" value="Chaperonin_Cpn60_CS"/>
</dbReference>
<dbReference type="InterPro" id="IPR001844">
    <property type="entry name" value="Cpn60/GroEL"/>
</dbReference>
<dbReference type="InterPro" id="IPR002423">
    <property type="entry name" value="Cpn60/GroEL/TCP-1"/>
</dbReference>
<dbReference type="InterPro" id="IPR027409">
    <property type="entry name" value="GroEL-like_apical_dom_sf"/>
</dbReference>
<dbReference type="InterPro" id="IPR027413">
    <property type="entry name" value="GROEL-like_equatorial_sf"/>
</dbReference>
<dbReference type="InterPro" id="IPR027410">
    <property type="entry name" value="TCP-1-like_intermed_sf"/>
</dbReference>
<dbReference type="NCBIfam" id="TIGR02348">
    <property type="entry name" value="GroEL"/>
    <property type="match status" value="1"/>
</dbReference>
<dbReference type="NCBIfam" id="NF000592">
    <property type="entry name" value="PRK00013.1"/>
    <property type="match status" value="1"/>
</dbReference>
<dbReference type="NCBIfam" id="NF009487">
    <property type="entry name" value="PRK12849.1"/>
    <property type="match status" value="1"/>
</dbReference>
<dbReference type="NCBIfam" id="NF009488">
    <property type="entry name" value="PRK12850.1"/>
    <property type="match status" value="1"/>
</dbReference>
<dbReference type="NCBIfam" id="NF009489">
    <property type="entry name" value="PRK12851.1"/>
    <property type="match status" value="1"/>
</dbReference>
<dbReference type="PANTHER" id="PTHR45633">
    <property type="entry name" value="60 KDA HEAT SHOCK PROTEIN, MITOCHONDRIAL"/>
    <property type="match status" value="1"/>
</dbReference>
<dbReference type="Pfam" id="PF00118">
    <property type="entry name" value="Cpn60_TCP1"/>
    <property type="match status" value="1"/>
</dbReference>
<dbReference type="PRINTS" id="PR00298">
    <property type="entry name" value="CHAPERONIN60"/>
</dbReference>
<dbReference type="SUPFAM" id="SSF52029">
    <property type="entry name" value="GroEL apical domain-like"/>
    <property type="match status" value="1"/>
</dbReference>
<dbReference type="SUPFAM" id="SSF48592">
    <property type="entry name" value="GroEL equatorial domain-like"/>
    <property type="match status" value="1"/>
</dbReference>
<dbReference type="SUPFAM" id="SSF54849">
    <property type="entry name" value="GroEL-intermediate domain like"/>
    <property type="match status" value="1"/>
</dbReference>
<dbReference type="PROSITE" id="PS00296">
    <property type="entry name" value="CHAPERONINS_CPN60"/>
    <property type="match status" value="1"/>
</dbReference>
<accession>B0SKU2</accession>
<protein>
    <recommendedName>
        <fullName evidence="1">Chaperonin GroEL</fullName>
        <ecNumber evidence="1">5.6.1.7</ecNumber>
    </recommendedName>
    <alternativeName>
        <fullName evidence="1">60 kDa chaperonin</fullName>
    </alternativeName>
    <alternativeName>
        <fullName evidence="1">Chaperonin-60</fullName>
        <shortName evidence="1">Cpn60</shortName>
    </alternativeName>
</protein>
<organism>
    <name type="scientific">Leptospira biflexa serovar Patoc (strain Patoc 1 / ATCC 23582 / Paris)</name>
    <dbReference type="NCBI Taxonomy" id="456481"/>
    <lineage>
        <taxon>Bacteria</taxon>
        <taxon>Pseudomonadati</taxon>
        <taxon>Spirochaetota</taxon>
        <taxon>Spirochaetia</taxon>
        <taxon>Leptospirales</taxon>
        <taxon>Leptospiraceae</taxon>
        <taxon>Leptospira</taxon>
    </lineage>
</organism>
<evidence type="ECO:0000255" key="1">
    <source>
        <dbReference type="HAMAP-Rule" id="MF_00600"/>
    </source>
</evidence>
<keyword id="KW-0067">ATP-binding</keyword>
<keyword id="KW-0143">Chaperone</keyword>
<keyword id="KW-0963">Cytoplasm</keyword>
<keyword id="KW-0413">Isomerase</keyword>
<keyword id="KW-0547">Nucleotide-binding</keyword>
<keyword id="KW-1185">Reference proteome</keyword>
<feature type="chain" id="PRO_1000130033" description="Chaperonin GroEL">
    <location>
        <begin position="1"/>
        <end position="549"/>
    </location>
</feature>
<feature type="binding site" evidence="1">
    <location>
        <begin position="29"/>
        <end position="32"/>
    </location>
    <ligand>
        <name>ATP</name>
        <dbReference type="ChEBI" id="CHEBI:30616"/>
    </ligand>
</feature>
<feature type="binding site" evidence="1">
    <location>
        <position position="50"/>
    </location>
    <ligand>
        <name>ATP</name>
        <dbReference type="ChEBI" id="CHEBI:30616"/>
    </ligand>
</feature>
<feature type="binding site" evidence="1">
    <location>
        <begin position="86"/>
        <end position="90"/>
    </location>
    <ligand>
        <name>ATP</name>
        <dbReference type="ChEBI" id="CHEBI:30616"/>
    </ligand>
</feature>
<feature type="binding site" evidence="1">
    <location>
        <position position="414"/>
    </location>
    <ligand>
        <name>ATP</name>
        <dbReference type="ChEBI" id="CHEBI:30616"/>
    </ligand>
</feature>
<feature type="binding site" evidence="1">
    <location>
        <begin position="477"/>
        <end position="479"/>
    </location>
    <ligand>
        <name>ATP</name>
        <dbReference type="ChEBI" id="CHEBI:30616"/>
    </ligand>
</feature>
<feature type="binding site" evidence="1">
    <location>
        <position position="493"/>
    </location>
    <ligand>
        <name>ATP</name>
        <dbReference type="ChEBI" id="CHEBI:30616"/>
    </ligand>
</feature>
<comment type="function">
    <text evidence="1">Together with its co-chaperonin GroES, plays an essential role in assisting protein folding. The GroEL-GroES system forms a nano-cage that allows encapsulation of the non-native substrate proteins and provides a physical environment optimized to promote and accelerate protein folding.</text>
</comment>
<comment type="catalytic activity">
    <reaction evidence="1">
        <text>ATP + H2O + a folded polypeptide = ADP + phosphate + an unfolded polypeptide.</text>
        <dbReference type="EC" id="5.6.1.7"/>
    </reaction>
</comment>
<comment type="subunit">
    <text evidence="1">Forms a cylinder of 14 subunits composed of two heptameric rings stacked back-to-back. Interacts with the co-chaperonin GroES.</text>
</comment>
<comment type="subcellular location">
    <subcellularLocation>
        <location evidence="1">Cytoplasm</location>
    </subcellularLocation>
</comment>
<comment type="similarity">
    <text evidence="1">Belongs to the chaperonin (HSP60) family.</text>
</comment>
<gene>
    <name evidence="1" type="primary">groEL</name>
    <name evidence="1" type="synonym">groL</name>
    <name type="ordered locus">LEPBI_I2344</name>
</gene>
<reference key="1">
    <citation type="journal article" date="2008" name="PLoS ONE">
        <title>Genome sequence of the saprophyte Leptospira biflexa provides insights into the evolution of Leptospira and the pathogenesis of leptospirosis.</title>
        <authorList>
            <person name="Picardeau M."/>
            <person name="Bulach D.M."/>
            <person name="Bouchier C."/>
            <person name="Zuerner R.L."/>
            <person name="Zidane N."/>
            <person name="Wilson P.J."/>
            <person name="Creno S."/>
            <person name="Kuczek E.S."/>
            <person name="Bommezzadri S."/>
            <person name="Davis J.C."/>
            <person name="McGrath A."/>
            <person name="Johnson M.J."/>
            <person name="Boursaux-Eude C."/>
            <person name="Seemann T."/>
            <person name="Rouy Z."/>
            <person name="Coppel R.L."/>
            <person name="Rood J.I."/>
            <person name="Lajus A."/>
            <person name="Davies J.K."/>
            <person name="Medigue C."/>
            <person name="Adler B."/>
        </authorList>
    </citation>
    <scope>NUCLEOTIDE SEQUENCE [LARGE SCALE GENOMIC DNA]</scope>
    <source>
        <strain>Patoc 1 / ATCC 23582 / Paris</strain>
    </source>
</reference>
<proteinExistence type="inferred from homology"/>
<name>CH60_LEPBP</name>